<accession>Q5LMC7</accession>
<organism>
    <name type="scientific">Ruegeria pomeroyi (strain ATCC 700808 / DSM 15171 / DSS-3)</name>
    <name type="common">Silicibacter pomeroyi</name>
    <dbReference type="NCBI Taxonomy" id="246200"/>
    <lineage>
        <taxon>Bacteria</taxon>
        <taxon>Pseudomonadati</taxon>
        <taxon>Pseudomonadota</taxon>
        <taxon>Alphaproteobacteria</taxon>
        <taxon>Rhodobacterales</taxon>
        <taxon>Roseobacteraceae</taxon>
        <taxon>Ruegeria</taxon>
    </lineage>
</organism>
<proteinExistence type="inferred from homology"/>
<sequence length="623" mass="69100">MQDTNPSQPDSPITGYACIQDYLRNLSGAPGVYRMLDAQARVLYVGKARNLKARVSNYARPGHSPRIERMIRETASMMFLTTRTETEALLLEQNLIKQLKPKYNVLLRDDKSFPNILVAKDHSFAQIKKHRGAKKEKGTYFGPFASAGAVNRTLNQLQKAFLLRNCTDAVFESRTRPCLLYQIKRCSAPCVGLISDQDYAAAVKDAERFLSGRSTRVQEELAEQMMAASEAMEFERAAALRDRIRALTTVQGTQGINPRGVAEADVVALHLENGQACVQVFFIRANQNWGNRDFYPRVGEDVSAAEVMEAFLGQFYDNKEPPRQLILSDAIENADLMTEALSEKAGRKVELLVPQRGEKAELVSGALRNARESLARRMSESATQTKLLGGLAEAFDLDGPPQRIEVYDNSHIQGTNAVGGMIVAGPEGFLKNQYRKFNIRGDDLTPGDDFGMMKEVLTRRFTRLLKEDPDRDKGLWPDLLLIDGGAGQVSAVHEIMMAHGVQDIPMVGVAKGIDRDHGKEEFHRTGQRPFALKRNDPVLYFIQRLRDEAHRFAIGTHRAKRAKAVSATPLDDIPGVGAARKRALLAHFGSAKAVSRADLADLTAVEGVSAGLAQKIYDFFHES</sequence>
<protein>
    <recommendedName>
        <fullName evidence="1">UvrABC system protein C</fullName>
        <shortName evidence="1">Protein UvrC</shortName>
    </recommendedName>
    <alternativeName>
        <fullName evidence="1">Excinuclease ABC subunit C</fullName>
    </alternativeName>
</protein>
<name>UVRC_RUEPO</name>
<gene>
    <name evidence="1" type="primary">uvrC</name>
    <name type="ordered locus">SPO3637</name>
</gene>
<comment type="function">
    <text evidence="1">The UvrABC repair system catalyzes the recognition and processing of DNA lesions. UvrC both incises the 5' and 3' sides of the lesion. The N-terminal half is responsible for the 3' incision and the C-terminal half is responsible for the 5' incision.</text>
</comment>
<comment type="subunit">
    <text evidence="1">Interacts with UvrB in an incision complex.</text>
</comment>
<comment type="subcellular location">
    <subcellularLocation>
        <location evidence="1">Cytoplasm</location>
    </subcellularLocation>
</comment>
<comment type="similarity">
    <text evidence="1">Belongs to the UvrC family.</text>
</comment>
<feature type="chain" id="PRO_0000227473" description="UvrABC system protein C">
    <location>
        <begin position="1"/>
        <end position="623"/>
    </location>
</feature>
<feature type="domain" description="GIY-YIG" evidence="1">
    <location>
        <begin position="28"/>
        <end position="105"/>
    </location>
</feature>
<feature type="domain" description="UVR" evidence="1">
    <location>
        <begin position="215"/>
        <end position="250"/>
    </location>
</feature>
<reference key="1">
    <citation type="journal article" date="2004" name="Nature">
        <title>Genome sequence of Silicibacter pomeroyi reveals adaptations to the marine environment.</title>
        <authorList>
            <person name="Moran M.A."/>
            <person name="Buchan A."/>
            <person name="Gonzalez J.M."/>
            <person name="Heidelberg J.F."/>
            <person name="Whitman W.B."/>
            <person name="Kiene R.P."/>
            <person name="Henriksen J.R."/>
            <person name="King G.M."/>
            <person name="Belas R."/>
            <person name="Fuqua C."/>
            <person name="Brinkac L.M."/>
            <person name="Lewis M."/>
            <person name="Johri S."/>
            <person name="Weaver B."/>
            <person name="Pai G."/>
            <person name="Eisen J.A."/>
            <person name="Rahe E."/>
            <person name="Sheldon W.M."/>
            <person name="Ye W."/>
            <person name="Miller T.R."/>
            <person name="Carlton J."/>
            <person name="Rasko D.A."/>
            <person name="Paulsen I.T."/>
            <person name="Ren Q."/>
            <person name="Daugherty S.C."/>
            <person name="DeBoy R.T."/>
            <person name="Dodson R.J."/>
            <person name="Durkin A.S."/>
            <person name="Madupu R."/>
            <person name="Nelson W.C."/>
            <person name="Sullivan S.A."/>
            <person name="Rosovitz M.J."/>
            <person name="Haft D.H."/>
            <person name="Selengut J."/>
            <person name="Ward N."/>
        </authorList>
    </citation>
    <scope>NUCLEOTIDE SEQUENCE [LARGE SCALE GENOMIC DNA]</scope>
    <source>
        <strain>ATCC 700808 / DSM 15171 / DSS-3</strain>
    </source>
</reference>
<reference key="2">
    <citation type="journal article" date="2014" name="Stand. Genomic Sci.">
        <title>An updated genome annotation for the model marine bacterium Ruegeria pomeroyi DSS-3.</title>
        <authorList>
            <person name="Rivers A.R."/>
            <person name="Smith C.B."/>
            <person name="Moran M.A."/>
        </authorList>
    </citation>
    <scope>GENOME REANNOTATION</scope>
    <source>
        <strain>ATCC 700808 / DSM 15171 / DSS-3</strain>
    </source>
</reference>
<keyword id="KW-0963">Cytoplasm</keyword>
<keyword id="KW-0227">DNA damage</keyword>
<keyword id="KW-0228">DNA excision</keyword>
<keyword id="KW-0234">DNA repair</keyword>
<keyword id="KW-0267">Excision nuclease</keyword>
<keyword id="KW-1185">Reference proteome</keyword>
<keyword id="KW-0742">SOS response</keyword>
<dbReference type="EMBL" id="CP000031">
    <property type="protein sequence ID" value="AAV96860.1"/>
    <property type="molecule type" value="Genomic_DNA"/>
</dbReference>
<dbReference type="RefSeq" id="WP_011049316.1">
    <property type="nucleotide sequence ID" value="NC_003911.12"/>
</dbReference>
<dbReference type="SMR" id="Q5LMC7"/>
<dbReference type="STRING" id="246200.SPO3637"/>
<dbReference type="PaxDb" id="246200-SPO3637"/>
<dbReference type="KEGG" id="sil:SPO3637"/>
<dbReference type="eggNOG" id="COG0322">
    <property type="taxonomic scope" value="Bacteria"/>
</dbReference>
<dbReference type="HOGENOM" id="CLU_014841_3_0_5"/>
<dbReference type="OrthoDB" id="9804933at2"/>
<dbReference type="Proteomes" id="UP000001023">
    <property type="component" value="Chromosome"/>
</dbReference>
<dbReference type="GO" id="GO:0005737">
    <property type="term" value="C:cytoplasm"/>
    <property type="evidence" value="ECO:0007669"/>
    <property type="project" value="UniProtKB-SubCell"/>
</dbReference>
<dbReference type="GO" id="GO:0009380">
    <property type="term" value="C:excinuclease repair complex"/>
    <property type="evidence" value="ECO:0007669"/>
    <property type="project" value="InterPro"/>
</dbReference>
<dbReference type="GO" id="GO:0003677">
    <property type="term" value="F:DNA binding"/>
    <property type="evidence" value="ECO:0007669"/>
    <property type="project" value="UniProtKB-UniRule"/>
</dbReference>
<dbReference type="GO" id="GO:0009381">
    <property type="term" value="F:excinuclease ABC activity"/>
    <property type="evidence" value="ECO:0007669"/>
    <property type="project" value="UniProtKB-UniRule"/>
</dbReference>
<dbReference type="GO" id="GO:0006289">
    <property type="term" value="P:nucleotide-excision repair"/>
    <property type="evidence" value="ECO:0007669"/>
    <property type="project" value="UniProtKB-UniRule"/>
</dbReference>
<dbReference type="GO" id="GO:0009432">
    <property type="term" value="P:SOS response"/>
    <property type="evidence" value="ECO:0007669"/>
    <property type="project" value="UniProtKB-UniRule"/>
</dbReference>
<dbReference type="CDD" id="cd10434">
    <property type="entry name" value="GIY-YIG_UvrC_Cho"/>
    <property type="match status" value="1"/>
</dbReference>
<dbReference type="FunFam" id="3.30.420.340:FF:000001">
    <property type="entry name" value="UvrABC system protein C"/>
    <property type="match status" value="1"/>
</dbReference>
<dbReference type="FunFam" id="3.40.1440.10:FF:000001">
    <property type="entry name" value="UvrABC system protein C"/>
    <property type="match status" value="1"/>
</dbReference>
<dbReference type="Gene3D" id="1.10.150.20">
    <property type="entry name" value="5' to 3' exonuclease, C-terminal subdomain"/>
    <property type="match status" value="1"/>
</dbReference>
<dbReference type="Gene3D" id="3.40.1440.10">
    <property type="entry name" value="GIY-YIG endonuclease"/>
    <property type="match status" value="1"/>
</dbReference>
<dbReference type="Gene3D" id="4.10.860.10">
    <property type="entry name" value="UVR domain"/>
    <property type="match status" value="1"/>
</dbReference>
<dbReference type="Gene3D" id="3.30.420.340">
    <property type="entry name" value="UvrC, RNAse H endonuclease domain"/>
    <property type="match status" value="1"/>
</dbReference>
<dbReference type="HAMAP" id="MF_00203">
    <property type="entry name" value="UvrC"/>
    <property type="match status" value="1"/>
</dbReference>
<dbReference type="InterPro" id="IPR000305">
    <property type="entry name" value="GIY-YIG_endonuc"/>
</dbReference>
<dbReference type="InterPro" id="IPR035901">
    <property type="entry name" value="GIY-YIG_endonuc_sf"/>
</dbReference>
<dbReference type="InterPro" id="IPR047296">
    <property type="entry name" value="GIY-YIG_UvrC_Cho"/>
</dbReference>
<dbReference type="InterPro" id="IPR003583">
    <property type="entry name" value="Hlx-hairpin-Hlx_DNA-bd_motif"/>
</dbReference>
<dbReference type="InterPro" id="IPR010994">
    <property type="entry name" value="RuvA_2-like"/>
</dbReference>
<dbReference type="InterPro" id="IPR001943">
    <property type="entry name" value="UVR_dom"/>
</dbReference>
<dbReference type="InterPro" id="IPR036876">
    <property type="entry name" value="UVR_dom_sf"/>
</dbReference>
<dbReference type="InterPro" id="IPR050066">
    <property type="entry name" value="UvrABC_protein_C"/>
</dbReference>
<dbReference type="InterPro" id="IPR004791">
    <property type="entry name" value="UvrC"/>
</dbReference>
<dbReference type="InterPro" id="IPR001162">
    <property type="entry name" value="UvrC_RNase_H_dom"/>
</dbReference>
<dbReference type="InterPro" id="IPR038476">
    <property type="entry name" value="UvrC_RNase_H_dom_sf"/>
</dbReference>
<dbReference type="NCBIfam" id="NF001824">
    <property type="entry name" value="PRK00558.1-5"/>
    <property type="match status" value="1"/>
</dbReference>
<dbReference type="NCBIfam" id="TIGR00194">
    <property type="entry name" value="uvrC"/>
    <property type="match status" value="1"/>
</dbReference>
<dbReference type="PANTHER" id="PTHR30562:SF1">
    <property type="entry name" value="UVRABC SYSTEM PROTEIN C"/>
    <property type="match status" value="1"/>
</dbReference>
<dbReference type="PANTHER" id="PTHR30562">
    <property type="entry name" value="UVRC/OXIDOREDUCTASE"/>
    <property type="match status" value="1"/>
</dbReference>
<dbReference type="Pfam" id="PF01541">
    <property type="entry name" value="GIY-YIG"/>
    <property type="match status" value="1"/>
</dbReference>
<dbReference type="Pfam" id="PF14520">
    <property type="entry name" value="HHH_5"/>
    <property type="match status" value="1"/>
</dbReference>
<dbReference type="Pfam" id="PF02151">
    <property type="entry name" value="UVR"/>
    <property type="match status" value="1"/>
</dbReference>
<dbReference type="Pfam" id="PF22920">
    <property type="entry name" value="UvrC_RNaseH"/>
    <property type="match status" value="1"/>
</dbReference>
<dbReference type="Pfam" id="PF08459">
    <property type="entry name" value="UvrC_RNaseH_dom"/>
    <property type="match status" value="1"/>
</dbReference>
<dbReference type="SMART" id="SM00465">
    <property type="entry name" value="GIYc"/>
    <property type="match status" value="1"/>
</dbReference>
<dbReference type="SMART" id="SM00278">
    <property type="entry name" value="HhH1"/>
    <property type="match status" value="2"/>
</dbReference>
<dbReference type="SUPFAM" id="SSF46600">
    <property type="entry name" value="C-terminal UvrC-binding domain of UvrB"/>
    <property type="match status" value="1"/>
</dbReference>
<dbReference type="SUPFAM" id="SSF82771">
    <property type="entry name" value="GIY-YIG endonuclease"/>
    <property type="match status" value="1"/>
</dbReference>
<dbReference type="SUPFAM" id="SSF47781">
    <property type="entry name" value="RuvA domain 2-like"/>
    <property type="match status" value="1"/>
</dbReference>
<dbReference type="PROSITE" id="PS50164">
    <property type="entry name" value="GIY_YIG"/>
    <property type="match status" value="1"/>
</dbReference>
<dbReference type="PROSITE" id="PS50151">
    <property type="entry name" value="UVR"/>
    <property type="match status" value="1"/>
</dbReference>
<dbReference type="PROSITE" id="PS50165">
    <property type="entry name" value="UVRC"/>
    <property type="match status" value="1"/>
</dbReference>
<evidence type="ECO:0000255" key="1">
    <source>
        <dbReference type="HAMAP-Rule" id="MF_00203"/>
    </source>
</evidence>